<proteinExistence type="inferred from homology"/>
<dbReference type="EC" id="2.2.1.7" evidence="1"/>
<dbReference type="EMBL" id="FM211192">
    <property type="protein sequence ID" value="CAR71133.1"/>
    <property type="molecule type" value="Genomic_DNA"/>
</dbReference>
<dbReference type="SMR" id="B8ZQW9"/>
<dbReference type="KEGG" id="mlb:MLBr01038"/>
<dbReference type="HOGENOM" id="CLU_009227_1_4_11"/>
<dbReference type="UniPathway" id="UPA00064">
    <property type="reaction ID" value="UER00091"/>
</dbReference>
<dbReference type="Proteomes" id="UP000006900">
    <property type="component" value="Chromosome"/>
</dbReference>
<dbReference type="GO" id="GO:0005829">
    <property type="term" value="C:cytosol"/>
    <property type="evidence" value="ECO:0007669"/>
    <property type="project" value="TreeGrafter"/>
</dbReference>
<dbReference type="GO" id="GO:0008661">
    <property type="term" value="F:1-deoxy-D-xylulose-5-phosphate synthase activity"/>
    <property type="evidence" value="ECO:0007669"/>
    <property type="project" value="UniProtKB-UniRule"/>
</dbReference>
<dbReference type="GO" id="GO:0000287">
    <property type="term" value="F:magnesium ion binding"/>
    <property type="evidence" value="ECO:0007669"/>
    <property type="project" value="UniProtKB-UniRule"/>
</dbReference>
<dbReference type="GO" id="GO:0030976">
    <property type="term" value="F:thiamine pyrophosphate binding"/>
    <property type="evidence" value="ECO:0007669"/>
    <property type="project" value="UniProtKB-UniRule"/>
</dbReference>
<dbReference type="GO" id="GO:0052865">
    <property type="term" value="P:1-deoxy-D-xylulose 5-phosphate biosynthetic process"/>
    <property type="evidence" value="ECO:0007669"/>
    <property type="project" value="UniProtKB-UniPathway"/>
</dbReference>
<dbReference type="GO" id="GO:0019288">
    <property type="term" value="P:isopentenyl diphosphate biosynthetic process, methylerythritol 4-phosphate pathway"/>
    <property type="evidence" value="ECO:0007669"/>
    <property type="project" value="TreeGrafter"/>
</dbReference>
<dbReference type="GO" id="GO:0016114">
    <property type="term" value="P:terpenoid biosynthetic process"/>
    <property type="evidence" value="ECO:0007669"/>
    <property type="project" value="UniProtKB-UniRule"/>
</dbReference>
<dbReference type="GO" id="GO:0009228">
    <property type="term" value="P:thiamine biosynthetic process"/>
    <property type="evidence" value="ECO:0007669"/>
    <property type="project" value="UniProtKB-UniRule"/>
</dbReference>
<dbReference type="CDD" id="cd02007">
    <property type="entry name" value="TPP_DXS"/>
    <property type="match status" value="1"/>
</dbReference>
<dbReference type="CDD" id="cd07033">
    <property type="entry name" value="TPP_PYR_DXS_TK_like"/>
    <property type="match status" value="1"/>
</dbReference>
<dbReference type="FunFam" id="3.40.50.920:FF:000002">
    <property type="entry name" value="1-deoxy-D-xylulose-5-phosphate synthase"/>
    <property type="match status" value="1"/>
</dbReference>
<dbReference type="FunFam" id="3.40.50.970:FF:000005">
    <property type="entry name" value="1-deoxy-D-xylulose-5-phosphate synthase"/>
    <property type="match status" value="1"/>
</dbReference>
<dbReference type="Gene3D" id="3.40.50.920">
    <property type="match status" value="1"/>
</dbReference>
<dbReference type="Gene3D" id="3.40.50.970">
    <property type="match status" value="2"/>
</dbReference>
<dbReference type="HAMAP" id="MF_00315">
    <property type="entry name" value="DXP_synth"/>
    <property type="match status" value="1"/>
</dbReference>
<dbReference type="InterPro" id="IPR005477">
    <property type="entry name" value="Dxylulose-5-P_synthase"/>
</dbReference>
<dbReference type="InterPro" id="IPR029061">
    <property type="entry name" value="THDP-binding"/>
</dbReference>
<dbReference type="InterPro" id="IPR009014">
    <property type="entry name" value="Transketo_C/PFOR_II"/>
</dbReference>
<dbReference type="InterPro" id="IPR005475">
    <property type="entry name" value="Transketolase-like_Pyr-bd"/>
</dbReference>
<dbReference type="InterPro" id="IPR020826">
    <property type="entry name" value="Transketolase_BS"/>
</dbReference>
<dbReference type="InterPro" id="IPR033248">
    <property type="entry name" value="Transketolase_C"/>
</dbReference>
<dbReference type="InterPro" id="IPR049557">
    <property type="entry name" value="Transketolase_CS"/>
</dbReference>
<dbReference type="NCBIfam" id="TIGR00204">
    <property type="entry name" value="dxs"/>
    <property type="match status" value="1"/>
</dbReference>
<dbReference type="NCBIfam" id="NF003933">
    <property type="entry name" value="PRK05444.2-2"/>
    <property type="match status" value="1"/>
</dbReference>
<dbReference type="PANTHER" id="PTHR43322">
    <property type="entry name" value="1-D-DEOXYXYLULOSE 5-PHOSPHATE SYNTHASE-RELATED"/>
    <property type="match status" value="1"/>
</dbReference>
<dbReference type="PANTHER" id="PTHR43322:SF5">
    <property type="entry name" value="1-DEOXY-D-XYLULOSE-5-PHOSPHATE SYNTHASE, CHLOROPLASTIC"/>
    <property type="match status" value="1"/>
</dbReference>
<dbReference type="Pfam" id="PF13292">
    <property type="entry name" value="DXP_synthase_N"/>
    <property type="match status" value="1"/>
</dbReference>
<dbReference type="Pfam" id="PF02779">
    <property type="entry name" value="Transket_pyr"/>
    <property type="match status" value="1"/>
</dbReference>
<dbReference type="Pfam" id="PF02780">
    <property type="entry name" value="Transketolase_C"/>
    <property type="match status" value="1"/>
</dbReference>
<dbReference type="SMART" id="SM00861">
    <property type="entry name" value="Transket_pyr"/>
    <property type="match status" value="1"/>
</dbReference>
<dbReference type="SUPFAM" id="SSF52518">
    <property type="entry name" value="Thiamin diphosphate-binding fold (THDP-binding)"/>
    <property type="match status" value="2"/>
</dbReference>
<dbReference type="SUPFAM" id="SSF52922">
    <property type="entry name" value="TK C-terminal domain-like"/>
    <property type="match status" value="1"/>
</dbReference>
<dbReference type="PROSITE" id="PS00801">
    <property type="entry name" value="TRANSKETOLASE_1"/>
    <property type="match status" value="1"/>
</dbReference>
<dbReference type="PROSITE" id="PS00802">
    <property type="entry name" value="TRANSKETOLASE_2"/>
    <property type="match status" value="1"/>
</dbReference>
<name>DXS_MYCLB</name>
<sequence>MLEQIRRPADLQHLSQQQLRDLAAEIRELLVHKVAATGGHLGPNLGVVELTLALHRVFDSPHDPIIFDTGHQAYVHKMLTGRCQDFDSLRKKAGLSGYPSRAESEHDWVESSHASTALSYADGLAKAFELAGNRNRHVVAVVGDGALTGGMCWEALNNIAATPRPVVIVVNDNGRSYAPTIGGVADHLATLRLQPAYERLLEKGRDALHSLPLIGQIAYRFMHSVKAGIKDSLSPQLLFTDLGLKYVGPVDGHDEHAVEVALRKARGFGGPVIVHVVTRKGMGYPPAEADQAEQMHTCGVMDPTTGQPTKIAAPDWTAIFSDALIGYAMKRRDIVAITAAMPGPTGLTAFGQCFPDRLFDVGIAEQHAMTSAAGLAMGRMHPVVAIYSTFLNRAFDQIMMDVALHKLPVTMVIDRAGITGSDGPSHNGMWDLSMLGIVPGMRVAAPRDAIRLREELGEALDVDDGPTAIRFPKGDVCEDIPALKRRSGVDVLAVPATGLAQDVLLVGVGVFASMALAVAKRLHNQGIGVTVIDPRWVLPVCDGVLELAHTHKLIVTLEDNGVNGGVGAAVSTALRQVEIDTPCRDVGLPQEFYDHASRSEVLADLGLTDQDVARRITGWVVAFGHCGSGDDAGQYGPRSSQTM</sequence>
<organism>
    <name type="scientific">Mycobacterium leprae (strain Br4923)</name>
    <dbReference type="NCBI Taxonomy" id="561304"/>
    <lineage>
        <taxon>Bacteria</taxon>
        <taxon>Bacillati</taxon>
        <taxon>Actinomycetota</taxon>
        <taxon>Actinomycetes</taxon>
        <taxon>Mycobacteriales</taxon>
        <taxon>Mycobacteriaceae</taxon>
        <taxon>Mycobacterium</taxon>
    </lineage>
</organism>
<accession>B8ZQW9</accession>
<keyword id="KW-0414">Isoprene biosynthesis</keyword>
<keyword id="KW-0460">Magnesium</keyword>
<keyword id="KW-0479">Metal-binding</keyword>
<keyword id="KW-0784">Thiamine biosynthesis</keyword>
<keyword id="KW-0786">Thiamine pyrophosphate</keyword>
<keyword id="KW-0808">Transferase</keyword>
<evidence type="ECO:0000255" key="1">
    <source>
        <dbReference type="HAMAP-Rule" id="MF_00315"/>
    </source>
</evidence>
<comment type="function">
    <text evidence="1">Catalyzes the acyloin condensation reaction between C atoms 2 and 3 of pyruvate and glyceraldehyde 3-phosphate to yield 1-deoxy-D-xylulose-5-phosphate (DXP).</text>
</comment>
<comment type="catalytic activity">
    <reaction evidence="1">
        <text>D-glyceraldehyde 3-phosphate + pyruvate + H(+) = 1-deoxy-D-xylulose 5-phosphate + CO2</text>
        <dbReference type="Rhea" id="RHEA:12605"/>
        <dbReference type="ChEBI" id="CHEBI:15361"/>
        <dbReference type="ChEBI" id="CHEBI:15378"/>
        <dbReference type="ChEBI" id="CHEBI:16526"/>
        <dbReference type="ChEBI" id="CHEBI:57792"/>
        <dbReference type="ChEBI" id="CHEBI:59776"/>
        <dbReference type="EC" id="2.2.1.7"/>
    </reaction>
</comment>
<comment type="cofactor">
    <cofactor evidence="1">
        <name>Mg(2+)</name>
        <dbReference type="ChEBI" id="CHEBI:18420"/>
    </cofactor>
    <text evidence="1">Binds 1 Mg(2+) ion per subunit.</text>
</comment>
<comment type="cofactor">
    <cofactor evidence="1">
        <name>thiamine diphosphate</name>
        <dbReference type="ChEBI" id="CHEBI:58937"/>
    </cofactor>
    <text evidence="1">Binds 1 thiamine pyrophosphate per subunit.</text>
</comment>
<comment type="pathway">
    <text evidence="1">Metabolic intermediate biosynthesis; 1-deoxy-D-xylulose 5-phosphate biosynthesis; 1-deoxy-D-xylulose 5-phosphate from D-glyceraldehyde 3-phosphate and pyruvate: step 1/1.</text>
</comment>
<comment type="subunit">
    <text evidence="1">Homodimer.</text>
</comment>
<comment type="similarity">
    <text evidence="1">Belongs to the transketolase family. DXPS subfamily.</text>
</comment>
<reference key="1">
    <citation type="journal article" date="2009" name="Nat. Genet.">
        <title>Comparative genomic and phylogeographic analysis of Mycobacterium leprae.</title>
        <authorList>
            <person name="Monot M."/>
            <person name="Honore N."/>
            <person name="Garnier T."/>
            <person name="Zidane N."/>
            <person name="Sherafi D."/>
            <person name="Paniz-Mondolfi A."/>
            <person name="Matsuoka M."/>
            <person name="Taylor G.M."/>
            <person name="Donoghue H.D."/>
            <person name="Bouwman A."/>
            <person name="Mays S."/>
            <person name="Watson C."/>
            <person name="Lockwood D."/>
            <person name="Khamispour A."/>
            <person name="Dowlati Y."/>
            <person name="Jianping S."/>
            <person name="Rea T.H."/>
            <person name="Vera-Cabrera L."/>
            <person name="Stefani M.M."/>
            <person name="Banu S."/>
            <person name="Macdonald M."/>
            <person name="Sapkota B.R."/>
            <person name="Spencer J.S."/>
            <person name="Thomas J."/>
            <person name="Harshman K."/>
            <person name="Singh P."/>
            <person name="Busso P."/>
            <person name="Gattiker A."/>
            <person name="Rougemont J."/>
            <person name="Brennan P.J."/>
            <person name="Cole S.T."/>
        </authorList>
    </citation>
    <scope>NUCLEOTIDE SEQUENCE [LARGE SCALE GENOMIC DNA]</scope>
    <source>
        <strain>Br4923</strain>
    </source>
</reference>
<protein>
    <recommendedName>
        <fullName evidence="1">1-deoxy-D-xylulose-5-phosphate synthase</fullName>
        <ecNumber evidence="1">2.2.1.7</ecNumber>
    </recommendedName>
    <alternativeName>
        <fullName evidence="1">1-deoxyxylulose-5-phosphate synthase</fullName>
        <shortName evidence="1">DXP synthase</shortName>
        <shortName evidence="1">DXPS</shortName>
    </alternativeName>
</protein>
<gene>
    <name evidence="1" type="primary">dxs</name>
    <name type="ordered locus">MLBr01038</name>
</gene>
<feature type="chain" id="PRO_1000132941" description="1-deoxy-D-xylulose-5-phosphate synthase">
    <location>
        <begin position="1"/>
        <end position="643"/>
    </location>
</feature>
<feature type="binding site" evidence="1">
    <location>
        <position position="71"/>
    </location>
    <ligand>
        <name>thiamine diphosphate</name>
        <dbReference type="ChEBI" id="CHEBI:58937"/>
    </ligand>
</feature>
<feature type="binding site" evidence="1">
    <location>
        <begin position="112"/>
        <end position="114"/>
    </location>
    <ligand>
        <name>thiamine diphosphate</name>
        <dbReference type="ChEBI" id="CHEBI:58937"/>
    </ligand>
</feature>
<feature type="binding site" evidence="1">
    <location>
        <position position="144"/>
    </location>
    <ligand>
        <name>Mg(2+)</name>
        <dbReference type="ChEBI" id="CHEBI:18420"/>
    </ligand>
</feature>
<feature type="binding site" evidence="1">
    <location>
        <begin position="145"/>
        <end position="146"/>
    </location>
    <ligand>
        <name>thiamine diphosphate</name>
        <dbReference type="ChEBI" id="CHEBI:58937"/>
    </ligand>
</feature>
<feature type="binding site" evidence="1">
    <location>
        <position position="173"/>
    </location>
    <ligand>
        <name>Mg(2+)</name>
        <dbReference type="ChEBI" id="CHEBI:18420"/>
    </ligand>
</feature>
<feature type="binding site" evidence="1">
    <location>
        <position position="173"/>
    </location>
    <ligand>
        <name>thiamine diphosphate</name>
        <dbReference type="ChEBI" id="CHEBI:58937"/>
    </ligand>
</feature>
<feature type="binding site" evidence="1">
    <location>
        <position position="284"/>
    </location>
    <ligand>
        <name>thiamine diphosphate</name>
        <dbReference type="ChEBI" id="CHEBI:58937"/>
    </ligand>
</feature>
<feature type="binding site" evidence="1">
    <location>
        <position position="365"/>
    </location>
    <ligand>
        <name>thiamine diphosphate</name>
        <dbReference type="ChEBI" id="CHEBI:58937"/>
    </ligand>
</feature>